<proteinExistence type="inferred from homology"/>
<reference key="1">
    <citation type="journal article" date="2008" name="J. Bacteriol.">
        <title>The pangenome structure of Escherichia coli: comparative genomic analysis of E. coli commensal and pathogenic isolates.</title>
        <authorList>
            <person name="Rasko D.A."/>
            <person name="Rosovitz M.J."/>
            <person name="Myers G.S.A."/>
            <person name="Mongodin E.F."/>
            <person name="Fricke W.F."/>
            <person name="Gajer P."/>
            <person name="Crabtree J."/>
            <person name="Sebaihia M."/>
            <person name="Thomson N.R."/>
            <person name="Chaudhuri R."/>
            <person name="Henderson I.R."/>
            <person name="Sperandio V."/>
            <person name="Ravel J."/>
        </authorList>
    </citation>
    <scope>NUCLEOTIDE SEQUENCE [LARGE SCALE GENOMIC DNA]</scope>
    <source>
        <strain>HS</strain>
    </source>
</reference>
<feature type="chain" id="PRO_0000366749" description="Ribosomal RNA large subunit methyltransferase K/L">
    <location>
        <begin position="1"/>
        <end position="702"/>
    </location>
</feature>
<feature type="domain" description="THUMP" evidence="1">
    <location>
        <begin position="43"/>
        <end position="154"/>
    </location>
</feature>
<sequence length="702" mass="78854">MNSLFASTARGLEELLKTELENLGAVECQVVQGGVHFKGDTRLVYQSLMWSRLASRIMLPLGECKVYSDLDLYLGVQAINWTEMFNPGATFAVHFSGLNDTIRNSQYGAMKVKDAIVDAFTRKNLPRPNVDRDAPDIRVNVWLHKETASIALDLSGDGLHLRGYRDRAGIAPIKETLAAAIVMRSGWQPGTPLLDPMCGSGTLLIEAAMLATDRAPGLHRGRWGFSGWAQHDEAIWQEVKAEAQTRARKGLAEYSSHFYGSDSDARVIQRARTNARLAGIGELITFEVKDVAQLTNPLPKGPYGTVLSNPPYGERLDSEPALIALHSLLGRIMKNQFGGWNLSLFSASPDLLSCLQLRADKQYKAKNGPLDCVQKNYHVAESTPDSKPAMVAEDYTNRLRKNLKKFEKWARQEGIECYRLYDADLPEYNVAVDRYADWVVVQEYAPPKTIDAHKARQRLFDIIAATISVLGIAPNKLVLKTRERQKGKNQYQKLGEKGEFLEVTEYNAHLWVNLTDYLDTGLFLDHRIARRMLGQMSKGKDFLNLFSYTGSATVHAGLGGARSTTTVDMSRTYLEWAERNLRLNGLTGRAHRLIQADCLAWLREANEQFDLIFIDPPTFSNSKRMEDAFDVQRDHLALMKDLKRLLRAGGTIMFSNNKRGFRMDLDGLAKLGLKAQEITQKTLSQDFARNRQIHNCWLITAA</sequence>
<keyword id="KW-0963">Cytoplasm</keyword>
<keyword id="KW-0489">Methyltransferase</keyword>
<keyword id="KW-0694">RNA-binding</keyword>
<keyword id="KW-0698">rRNA processing</keyword>
<keyword id="KW-0949">S-adenosyl-L-methionine</keyword>
<keyword id="KW-0808">Transferase</keyword>
<accession>A7ZYQ0</accession>
<gene>
    <name evidence="1" type="primary">rlmL</name>
    <name type="ordered locus">EcHS_A1057</name>
</gene>
<protein>
    <recommendedName>
        <fullName evidence="1">Ribosomal RNA large subunit methyltransferase K/L</fullName>
    </recommendedName>
    <domain>
        <recommendedName>
            <fullName evidence="1">23S rRNA m2G2445 methyltransferase</fullName>
            <ecNumber evidence="1">2.1.1.173</ecNumber>
        </recommendedName>
        <alternativeName>
            <fullName evidence="1">rRNA (guanine-N(2)-)-methyltransferase RlmL</fullName>
        </alternativeName>
    </domain>
    <domain>
        <recommendedName>
            <fullName evidence="1">23S rRNA m7G2069 methyltransferase</fullName>
            <ecNumber evidence="1">2.1.1.264</ecNumber>
        </recommendedName>
        <alternativeName>
            <fullName evidence="1">rRNA (guanine-N(7)-)-methyltransferase RlmK</fullName>
        </alternativeName>
    </domain>
</protein>
<organism>
    <name type="scientific">Escherichia coli O9:H4 (strain HS)</name>
    <dbReference type="NCBI Taxonomy" id="331112"/>
    <lineage>
        <taxon>Bacteria</taxon>
        <taxon>Pseudomonadati</taxon>
        <taxon>Pseudomonadota</taxon>
        <taxon>Gammaproteobacteria</taxon>
        <taxon>Enterobacterales</taxon>
        <taxon>Enterobacteriaceae</taxon>
        <taxon>Escherichia</taxon>
    </lineage>
</organism>
<dbReference type="EC" id="2.1.1.173" evidence="1"/>
<dbReference type="EC" id="2.1.1.264" evidence="1"/>
<dbReference type="EMBL" id="CP000802">
    <property type="protein sequence ID" value="ABV05404.1"/>
    <property type="molecule type" value="Genomic_DNA"/>
</dbReference>
<dbReference type="SMR" id="A7ZYQ0"/>
<dbReference type="KEGG" id="ecx:EcHS_A1057"/>
<dbReference type="HOGENOM" id="CLU_014042_2_0_6"/>
<dbReference type="GO" id="GO:0005737">
    <property type="term" value="C:cytoplasm"/>
    <property type="evidence" value="ECO:0007669"/>
    <property type="project" value="UniProtKB-SubCell"/>
</dbReference>
<dbReference type="GO" id="GO:0052915">
    <property type="term" value="F:23S rRNA (guanine(2445)-N(2))-methyltransferase activity"/>
    <property type="evidence" value="ECO:0007669"/>
    <property type="project" value="UniProtKB-UniRule"/>
</dbReference>
<dbReference type="GO" id="GO:0003723">
    <property type="term" value="F:RNA binding"/>
    <property type="evidence" value="ECO:0007669"/>
    <property type="project" value="UniProtKB-KW"/>
</dbReference>
<dbReference type="GO" id="GO:0070043">
    <property type="term" value="F:rRNA (guanine-N7-)-methyltransferase activity"/>
    <property type="evidence" value="ECO:0007669"/>
    <property type="project" value="UniProtKB-UniRule"/>
</dbReference>
<dbReference type="CDD" id="cd02440">
    <property type="entry name" value="AdoMet_MTases"/>
    <property type="match status" value="1"/>
</dbReference>
<dbReference type="CDD" id="cd11715">
    <property type="entry name" value="THUMP_AdoMetMT"/>
    <property type="match status" value="1"/>
</dbReference>
<dbReference type="FunFam" id="3.30.750.80:FF:000001">
    <property type="entry name" value="Ribosomal RNA large subunit methyltransferase K/L"/>
    <property type="match status" value="1"/>
</dbReference>
<dbReference type="FunFam" id="3.40.50.150:FF:000039">
    <property type="entry name" value="Ribosomal RNA large subunit methyltransferase K/L"/>
    <property type="match status" value="1"/>
</dbReference>
<dbReference type="Gene3D" id="3.30.2130.30">
    <property type="match status" value="1"/>
</dbReference>
<dbReference type="Gene3D" id="3.30.750.80">
    <property type="entry name" value="RNA methyltransferase domain (HRMD) like"/>
    <property type="match status" value="1"/>
</dbReference>
<dbReference type="Gene3D" id="3.40.50.150">
    <property type="entry name" value="Vaccinia Virus protein VP39"/>
    <property type="match status" value="2"/>
</dbReference>
<dbReference type="HAMAP" id="MF_01858">
    <property type="entry name" value="23SrRNA_methyltr_KL"/>
    <property type="match status" value="1"/>
</dbReference>
<dbReference type="InterPro" id="IPR017244">
    <property type="entry name" value="23SrRNA_methyltr_KL"/>
</dbReference>
<dbReference type="InterPro" id="IPR002052">
    <property type="entry name" value="DNA_methylase_N6_adenine_CS"/>
</dbReference>
<dbReference type="InterPro" id="IPR000241">
    <property type="entry name" value="RlmKL-like_Mtase"/>
</dbReference>
<dbReference type="InterPro" id="IPR053943">
    <property type="entry name" value="RlmKL-like_Mtase_CS"/>
</dbReference>
<dbReference type="InterPro" id="IPR054170">
    <property type="entry name" value="RlmL_1st"/>
</dbReference>
<dbReference type="InterPro" id="IPR019614">
    <property type="entry name" value="SAM-dep_methyl-trfase"/>
</dbReference>
<dbReference type="InterPro" id="IPR029063">
    <property type="entry name" value="SAM-dependent_MTases_sf"/>
</dbReference>
<dbReference type="InterPro" id="IPR004114">
    <property type="entry name" value="THUMP_dom"/>
</dbReference>
<dbReference type="NCBIfam" id="NF008748">
    <property type="entry name" value="PRK11783.1"/>
    <property type="match status" value="1"/>
</dbReference>
<dbReference type="PANTHER" id="PTHR47313">
    <property type="entry name" value="RIBOSOMAL RNA LARGE SUBUNIT METHYLTRANSFERASE K/L"/>
    <property type="match status" value="1"/>
</dbReference>
<dbReference type="PANTHER" id="PTHR47313:SF1">
    <property type="entry name" value="RIBOSOMAL RNA LARGE SUBUNIT METHYLTRANSFERASE K_L"/>
    <property type="match status" value="1"/>
</dbReference>
<dbReference type="Pfam" id="PF10672">
    <property type="entry name" value="Methyltrans_SAM"/>
    <property type="match status" value="1"/>
</dbReference>
<dbReference type="Pfam" id="PF22020">
    <property type="entry name" value="RlmL_1st"/>
    <property type="match status" value="1"/>
</dbReference>
<dbReference type="Pfam" id="PF02926">
    <property type="entry name" value="THUMP"/>
    <property type="match status" value="1"/>
</dbReference>
<dbReference type="Pfam" id="PF01170">
    <property type="entry name" value="UPF0020"/>
    <property type="match status" value="1"/>
</dbReference>
<dbReference type="PIRSF" id="PIRSF037618">
    <property type="entry name" value="RNA_Mtase_bacteria_prd"/>
    <property type="match status" value="1"/>
</dbReference>
<dbReference type="PRINTS" id="PR00507">
    <property type="entry name" value="N12N6MTFRASE"/>
</dbReference>
<dbReference type="SMART" id="SM00981">
    <property type="entry name" value="THUMP"/>
    <property type="match status" value="1"/>
</dbReference>
<dbReference type="SUPFAM" id="SSF53335">
    <property type="entry name" value="S-adenosyl-L-methionine-dependent methyltransferases"/>
    <property type="match status" value="2"/>
</dbReference>
<dbReference type="PROSITE" id="PS51165">
    <property type="entry name" value="THUMP"/>
    <property type="match status" value="1"/>
</dbReference>
<dbReference type="PROSITE" id="PS01261">
    <property type="entry name" value="UPF0020"/>
    <property type="match status" value="1"/>
</dbReference>
<name>RLMKL_ECOHS</name>
<comment type="function">
    <text evidence="1">Specifically methylates the guanine in position 2445 (m2G2445) and the guanine in position 2069 (m7G2069) of 23S rRNA.</text>
</comment>
<comment type="catalytic activity">
    <reaction evidence="1">
        <text>guanosine(2445) in 23S rRNA + S-adenosyl-L-methionine = N(2)-methylguanosine(2445) in 23S rRNA + S-adenosyl-L-homocysteine + H(+)</text>
        <dbReference type="Rhea" id="RHEA:42740"/>
        <dbReference type="Rhea" id="RHEA-COMP:10215"/>
        <dbReference type="Rhea" id="RHEA-COMP:10216"/>
        <dbReference type="ChEBI" id="CHEBI:15378"/>
        <dbReference type="ChEBI" id="CHEBI:57856"/>
        <dbReference type="ChEBI" id="CHEBI:59789"/>
        <dbReference type="ChEBI" id="CHEBI:74269"/>
        <dbReference type="ChEBI" id="CHEBI:74481"/>
        <dbReference type="EC" id="2.1.1.173"/>
    </reaction>
</comment>
<comment type="catalytic activity">
    <reaction evidence="1">
        <text>guanosine(2069) in 23S rRNA + S-adenosyl-L-methionine = N(2)-methylguanosine(2069) in 23S rRNA + S-adenosyl-L-homocysteine + H(+)</text>
        <dbReference type="Rhea" id="RHEA:43772"/>
        <dbReference type="Rhea" id="RHEA-COMP:10688"/>
        <dbReference type="Rhea" id="RHEA-COMP:10689"/>
        <dbReference type="ChEBI" id="CHEBI:15378"/>
        <dbReference type="ChEBI" id="CHEBI:57856"/>
        <dbReference type="ChEBI" id="CHEBI:59789"/>
        <dbReference type="ChEBI" id="CHEBI:74269"/>
        <dbReference type="ChEBI" id="CHEBI:74481"/>
        <dbReference type="EC" id="2.1.1.264"/>
    </reaction>
</comment>
<comment type="subcellular location">
    <subcellularLocation>
        <location evidence="1">Cytoplasm</location>
    </subcellularLocation>
</comment>
<comment type="similarity">
    <text evidence="1">Belongs to the methyltransferase superfamily. RlmKL family.</text>
</comment>
<evidence type="ECO:0000255" key="1">
    <source>
        <dbReference type="HAMAP-Rule" id="MF_01858"/>
    </source>
</evidence>